<keyword id="KW-0004">4Fe-4S</keyword>
<keyword id="KW-0408">Iron</keyword>
<keyword id="KW-0411">Iron-sulfur</keyword>
<keyword id="KW-0456">Lyase</keyword>
<keyword id="KW-0479">Metal-binding</keyword>
<keyword id="KW-0949">S-adenosyl-L-methionine</keyword>
<keyword id="KW-0784">Thiamine biosynthesis</keyword>
<keyword id="KW-0862">Zinc</keyword>
<gene>
    <name evidence="1" type="primary">thiC</name>
    <name type="ordered locus">BCB4264_A5347</name>
</gene>
<dbReference type="EC" id="4.1.99.17" evidence="1"/>
<dbReference type="EMBL" id="CP001176">
    <property type="protein sequence ID" value="ACK59962.1"/>
    <property type="molecule type" value="Genomic_DNA"/>
</dbReference>
<dbReference type="RefSeq" id="WP_000814485.1">
    <property type="nucleotide sequence ID" value="NC_011725.1"/>
</dbReference>
<dbReference type="SMR" id="B7HEM8"/>
<dbReference type="KEGG" id="bcb:BCB4264_A5347"/>
<dbReference type="HOGENOM" id="CLU_013181_2_1_9"/>
<dbReference type="UniPathway" id="UPA00060"/>
<dbReference type="Proteomes" id="UP000007096">
    <property type="component" value="Chromosome"/>
</dbReference>
<dbReference type="GO" id="GO:0005829">
    <property type="term" value="C:cytosol"/>
    <property type="evidence" value="ECO:0007669"/>
    <property type="project" value="TreeGrafter"/>
</dbReference>
<dbReference type="GO" id="GO:0051539">
    <property type="term" value="F:4 iron, 4 sulfur cluster binding"/>
    <property type="evidence" value="ECO:0007669"/>
    <property type="project" value="UniProtKB-KW"/>
</dbReference>
<dbReference type="GO" id="GO:0016830">
    <property type="term" value="F:carbon-carbon lyase activity"/>
    <property type="evidence" value="ECO:0007669"/>
    <property type="project" value="InterPro"/>
</dbReference>
<dbReference type="GO" id="GO:0008270">
    <property type="term" value="F:zinc ion binding"/>
    <property type="evidence" value="ECO:0007669"/>
    <property type="project" value="UniProtKB-UniRule"/>
</dbReference>
<dbReference type="GO" id="GO:0009228">
    <property type="term" value="P:thiamine biosynthetic process"/>
    <property type="evidence" value="ECO:0007669"/>
    <property type="project" value="UniProtKB-KW"/>
</dbReference>
<dbReference type="GO" id="GO:0009229">
    <property type="term" value="P:thiamine diphosphate biosynthetic process"/>
    <property type="evidence" value="ECO:0007669"/>
    <property type="project" value="UniProtKB-UniRule"/>
</dbReference>
<dbReference type="FunFam" id="3.20.20.540:FF:000001">
    <property type="entry name" value="Phosphomethylpyrimidine synthase"/>
    <property type="match status" value="1"/>
</dbReference>
<dbReference type="Gene3D" id="6.10.250.620">
    <property type="match status" value="1"/>
</dbReference>
<dbReference type="Gene3D" id="3.20.20.540">
    <property type="entry name" value="Radical SAM ThiC family, central domain"/>
    <property type="match status" value="1"/>
</dbReference>
<dbReference type="HAMAP" id="MF_00089">
    <property type="entry name" value="ThiC"/>
    <property type="match status" value="1"/>
</dbReference>
<dbReference type="InterPro" id="IPR037509">
    <property type="entry name" value="ThiC"/>
</dbReference>
<dbReference type="InterPro" id="IPR025747">
    <property type="entry name" value="ThiC-associated_dom"/>
</dbReference>
<dbReference type="InterPro" id="IPR038521">
    <property type="entry name" value="ThiC/Bza_core_dom"/>
</dbReference>
<dbReference type="InterPro" id="IPR002817">
    <property type="entry name" value="ThiC/BzaA/B"/>
</dbReference>
<dbReference type="NCBIfam" id="NF006763">
    <property type="entry name" value="PRK09284.1"/>
    <property type="match status" value="1"/>
</dbReference>
<dbReference type="NCBIfam" id="NF009895">
    <property type="entry name" value="PRK13352.1"/>
    <property type="match status" value="1"/>
</dbReference>
<dbReference type="NCBIfam" id="TIGR00190">
    <property type="entry name" value="thiC"/>
    <property type="match status" value="1"/>
</dbReference>
<dbReference type="PANTHER" id="PTHR30557:SF1">
    <property type="entry name" value="PHOSPHOMETHYLPYRIMIDINE SYNTHASE, CHLOROPLASTIC"/>
    <property type="match status" value="1"/>
</dbReference>
<dbReference type="PANTHER" id="PTHR30557">
    <property type="entry name" value="THIAMINE BIOSYNTHESIS PROTEIN THIC"/>
    <property type="match status" value="1"/>
</dbReference>
<dbReference type="Pfam" id="PF13667">
    <property type="entry name" value="ThiC-associated"/>
    <property type="match status" value="1"/>
</dbReference>
<dbReference type="Pfam" id="PF01964">
    <property type="entry name" value="ThiC_Rad_SAM"/>
    <property type="match status" value="1"/>
</dbReference>
<dbReference type="SFLD" id="SFLDF00407">
    <property type="entry name" value="phosphomethylpyrimidine_syntha"/>
    <property type="match status" value="1"/>
</dbReference>
<dbReference type="SFLD" id="SFLDG01114">
    <property type="entry name" value="phosphomethylpyrimidine_syntha"/>
    <property type="match status" value="1"/>
</dbReference>
<dbReference type="SFLD" id="SFLDS00113">
    <property type="entry name" value="Radical_SAM_Phosphomethylpyrim"/>
    <property type="match status" value="1"/>
</dbReference>
<evidence type="ECO:0000255" key="1">
    <source>
        <dbReference type="HAMAP-Rule" id="MF_00089"/>
    </source>
</evidence>
<evidence type="ECO:0000256" key="2">
    <source>
        <dbReference type="SAM" id="MobiDB-lite"/>
    </source>
</evidence>
<comment type="function">
    <text evidence="1">Catalyzes the synthesis of the hydroxymethylpyrimidine phosphate (HMP-P) moiety of thiamine from aminoimidazole ribotide (AIR) in a radical S-adenosyl-L-methionine (SAM)-dependent reaction.</text>
</comment>
<comment type="catalytic activity">
    <reaction evidence="1">
        <text>5-amino-1-(5-phospho-beta-D-ribosyl)imidazole + S-adenosyl-L-methionine = 4-amino-2-methyl-5-(phosphooxymethyl)pyrimidine + CO + 5'-deoxyadenosine + formate + L-methionine + 3 H(+)</text>
        <dbReference type="Rhea" id="RHEA:24840"/>
        <dbReference type="ChEBI" id="CHEBI:15378"/>
        <dbReference type="ChEBI" id="CHEBI:15740"/>
        <dbReference type="ChEBI" id="CHEBI:17245"/>
        <dbReference type="ChEBI" id="CHEBI:17319"/>
        <dbReference type="ChEBI" id="CHEBI:57844"/>
        <dbReference type="ChEBI" id="CHEBI:58354"/>
        <dbReference type="ChEBI" id="CHEBI:59789"/>
        <dbReference type="ChEBI" id="CHEBI:137981"/>
        <dbReference type="EC" id="4.1.99.17"/>
    </reaction>
</comment>
<comment type="cofactor">
    <cofactor evidence="1">
        <name>[4Fe-4S] cluster</name>
        <dbReference type="ChEBI" id="CHEBI:49883"/>
    </cofactor>
    <text evidence="1">Binds 1 [4Fe-4S] cluster per subunit. The cluster is coordinated with 3 cysteines and an exchangeable S-adenosyl-L-methionine.</text>
</comment>
<comment type="pathway">
    <text evidence="1">Cofactor biosynthesis; thiamine diphosphate biosynthesis.</text>
</comment>
<comment type="similarity">
    <text evidence="1">Belongs to the ThiC family.</text>
</comment>
<proteinExistence type="inferred from homology"/>
<accession>B7HEM8</accession>
<feature type="chain" id="PRO_1000198046" description="Phosphomethylpyrimidine synthase">
    <location>
        <begin position="1"/>
        <end position="586"/>
    </location>
</feature>
<feature type="region of interest" description="Disordered" evidence="2">
    <location>
        <begin position="1"/>
        <end position="33"/>
    </location>
</feature>
<feature type="compositionally biased region" description="Basic and acidic residues" evidence="2">
    <location>
        <begin position="22"/>
        <end position="33"/>
    </location>
</feature>
<feature type="binding site" evidence="1">
    <location>
        <position position="193"/>
    </location>
    <ligand>
        <name>substrate</name>
    </ligand>
</feature>
<feature type="binding site" evidence="1">
    <location>
        <position position="222"/>
    </location>
    <ligand>
        <name>substrate</name>
    </ligand>
</feature>
<feature type="binding site" evidence="1">
    <location>
        <position position="251"/>
    </location>
    <ligand>
        <name>substrate</name>
    </ligand>
</feature>
<feature type="binding site" evidence="1">
    <location>
        <position position="287"/>
    </location>
    <ligand>
        <name>substrate</name>
    </ligand>
</feature>
<feature type="binding site" evidence="1">
    <location>
        <begin position="307"/>
        <end position="309"/>
    </location>
    <ligand>
        <name>substrate</name>
    </ligand>
</feature>
<feature type="binding site" evidence="1">
    <location>
        <begin position="348"/>
        <end position="351"/>
    </location>
    <ligand>
        <name>substrate</name>
    </ligand>
</feature>
<feature type="binding site" evidence="1">
    <location>
        <position position="387"/>
    </location>
    <ligand>
        <name>substrate</name>
    </ligand>
</feature>
<feature type="binding site" evidence="1">
    <location>
        <position position="391"/>
    </location>
    <ligand>
        <name>Zn(2+)</name>
        <dbReference type="ChEBI" id="CHEBI:29105"/>
    </ligand>
</feature>
<feature type="binding site" evidence="1">
    <location>
        <position position="414"/>
    </location>
    <ligand>
        <name>substrate</name>
    </ligand>
</feature>
<feature type="binding site" evidence="1">
    <location>
        <position position="455"/>
    </location>
    <ligand>
        <name>Zn(2+)</name>
        <dbReference type="ChEBI" id="CHEBI:29105"/>
    </ligand>
</feature>
<feature type="binding site" evidence="1">
    <location>
        <position position="535"/>
    </location>
    <ligand>
        <name>[4Fe-4S] cluster</name>
        <dbReference type="ChEBI" id="CHEBI:49883"/>
        <note>4Fe-4S-S-AdoMet</note>
    </ligand>
</feature>
<feature type="binding site" evidence="1">
    <location>
        <position position="538"/>
    </location>
    <ligand>
        <name>[4Fe-4S] cluster</name>
        <dbReference type="ChEBI" id="CHEBI:49883"/>
        <note>4Fe-4S-S-AdoMet</note>
    </ligand>
</feature>
<feature type="binding site" evidence="1">
    <location>
        <position position="543"/>
    </location>
    <ligand>
        <name>[4Fe-4S] cluster</name>
        <dbReference type="ChEBI" id="CHEBI:49883"/>
        <note>4Fe-4S-S-AdoMet</note>
    </ligand>
</feature>
<name>THIC_BACC4</name>
<organism>
    <name type="scientific">Bacillus cereus (strain B4264)</name>
    <dbReference type="NCBI Taxonomy" id="405532"/>
    <lineage>
        <taxon>Bacteria</taxon>
        <taxon>Bacillati</taxon>
        <taxon>Bacillota</taxon>
        <taxon>Bacilli</taxon>
        <taxon>Bacillales</taxon>
        <taxon>Bacillaceae</taxon>
        <taxon>Bacillus</taxon>
        <taxon>Bacillus cereus group</taxon>
    </lineage>
</organism>
<sequence length="586" mass="65746">MKQSVSAEQIELKSSLPGSKKVYVDGPREGMKVPMREIEQSETNGVPNPPIRVYDTSGPYTDPEYKVELEKGIPTPRHSWIMGRGDVEAYEGREVKPEDDGVKVASKHTPVFPQMDRQPLRAKQGANVTQMHYARNGIITSEMEYVAIREGVEPEFVRKEIAEGRAILPANINHPEAEPMIIGRNFHVKVNANIGNSAVSSSIAEEVEKMTWATRWGADTIMDLSTGKNIHTTREWIIRNAPVPVGTVPIYQALEKVNGIAEDLTWEVYRDTLIEQAEQGVDYFTIHAGVLLRYIPITAKRTTGIVSRGGSIMAQWCLFHHKENFLYTHFEEICEIMKQYDVSFSLGDGLRPGSIADANDEAQFSELETLGELTKIAWKHDVQVMIEGPGHVPMHLIKENMEKELDICQGAPFYTLGPLTTDIAPGYDHITSAIGAAMIGWFGTAMLCYVTPKEHLGLPNKDDVRTGVITYKIAAHAADLAKGHKTAHQRDDALSKARFEFRWRDQFNLSLDPERAMEYHDETLPAEGAKTAHFCSMCGPKFCSMRISHDIREYAKENDLETTEAIEKGMKEKAEEFKEAGSHLYQ</sequence>
<reference key="1">
    <citation type="submission" date="2008-10" db="EMBL/GenBank/DDBJ databases">
        <title>Genome sequence of Bacillus cereus B4264.</title>
        <authorList>
            <person name="Dodson R.J."/>
            <person name="Durkin A.S."/>
            <person name="Rosovitz M.J."/>
            <person name="Rasko D.A."/>
            <person name="Hoffmaster A."/>
            <person name="Ravel J."/>
            <person name="Sutton G."/>
        </authorList>
    </citation>
    <scope>NUCLEOTIDE SEQUENCE [LARGE SCALE GENOMIC DNA]</scope>
    <source>
        <strain>B4264</strain>
    </source>
</reference>
<protein>
    <recommendedName>
        <fullName evidence="1">Phosphomethylpyrimidine synthase</fullName>
        <ecNumber evidence="1">4.1.99.17</ecNumber>
    </recommendedName>
    <alternativeName>
        <fullName evidence="1">Hydroxymethylpyrimidine phosphate synthase</fullName>
        <shortName evidence="1">HMP-P synthase</shortName>
        <shortName evidence="1">HMP-phosphate synthase</shortName>
        <shortName evidence="1">HMPP synthase</shortName>
    </alternativeName>
    <alternativeName>
        <fullName evidence="1">Thiamine biosynthesis protein ThiC</fullName>
    </alternativeName>
</protein>